<dbReference type="EMBL" id="CU928160">
    <property type="protein sequence ID" value="CAQ97829.1"/>
    <property type="molecule type" value="Genomic_DNA"/>
</dbReference>
<dbReference type="RefSeq" id="WP_000572668.1">
    <property type="nucleotide sequence ID" value="NC_011741.1"/>
</dbReference>
<dbReference type="SMR" id="B7M853"/>
<dbReference type="KEGG" id="ecr:ECIAI1_0965"/>
<dbReference type="HOGENOM" id="CLU_004430_0_0_6"/>
<dbReference type="GO" id="GO:0005737">
    <property type="term" value="C:cytoplasm"/>
    <property type="evidence" value="ECO:0007669"/>
    <property type="project" value="UniProtKB-UniRule"/>
</dbReference>
<dbReference type="GO" id="GO:0009295">
    <property type="term" value="C:nucleoid"/>
    <property type="evidence" value="ECO:0007669"/>
    <property type="project" value="UniProtKB-SubCell"/>
</dbReference>
<dbReference type="GO" id="GO:0005524">
    <property type="term" value="F:ATP binding"/>
    <property type="evidence" value="ECO:0007669"/>
    <property type="project" value="UniProtKB-UniRule"/>
</dbReference>
<dbReference type="GO" id="GO:0003677">
    <property type="term" value="F:DNA binding"/>
    <property type="evidence" value="ECO:0007669"/>
    <property type="project" value="UniProtKB-UniRule"/>
</dbReference>
<dbReference type="GO" id="GO:0051301">
    <property type="term" value="P:cell division"/>
    <property type="evidence" value="ECO:0007669"/>
    <property type="project" value="UniProtKB-KW"/>
</dbReference>
<dbReference type="GO" id="GO:0030261">
    <property type="term" value="P:chromosome condensation"/>
    <property type="evidence" value="ECO:0007669"/>
    <property type="project" value="UniProtKB-KW"/>
</dbReference>
<dbReference type="GO" id="GO:0007059">
    <property type="term" value="P:chromosome segregation"/>
    <property type="evidence" value="ECO:0007669"/>
    <property type="project" value="UniProtKB-UniRule"/>
</dbReference>
<dbReference type="GO" id="GO:0006260">
    <property type="term" value="P:DNA replication"/>
    <property type="evidence" value="ECO:0007669"/>
    <property type="project" value="UniProtKB-UniRule"/>
</dbReference>
<dbReference type="FunFam" id="1.20.58.850:FF:000001">
    <property type="entry name" value="Chromosome partition protein MukB"/>
    <property type="match status" value="1"/>
</dbReference>
<dbReference type="FunFam" id="3.30.70.3500:FF:000001">
    <property type="entry name" value="Chromosome partition protein MukB"/>
    <property type="match status" value="1"/>
</dbReference>
<dbReference type="FunFam" id="3.40.1140.10:FF:000001">
    <property type="entry name" value="Chromosome partition protein MukB"/>
    <property type="match status" value="1"/>
</dbReference>
<dbReference type="FunFam" id="3.40.1140.10:FF:000002">
    <property type="entry name" value="Chromosome partition protein MukB"/>
    <property type="match status" value="1"/>
</dbReference>
<dbReference type="Gene3D" id="1.20.58.850">
    <property type="match status" value="1"/>
</dbReference>
<dbReference type="Gene3D" id="3.40.1140.10">
    <property type="match status" value="2"/>
</dbReference>
<dbReference type="Gene3D" id="1.20.5.420">
    <property type="entry name" value="Immunoglobulin FC, subunit C"/>
    <property type="match status" value="1"/>
</dbReference>
<dbReference type="Gene3D" id="3.30.70.3500">
    <property type="entry name" value="MukB, hinge domain"/>
    <property type="match status" value="1"/>
</dbReference>
<dbReference type="HAMAP" id="MF_01800">
    <property type="entry name" value="MukB"/>
    <property type="match status" value="1"/>
</dbReference>
<dbReference type="InterPro" id="IPR012090">
    <property type="entry name" value="MukB"/>
</dbReference>
<dbReference type="InterPro" id="IPR050308">
    <property type="entry name" value="MukB/SMC"/>
</dbReference>
<dbReference type="InterPro" id="IPR032520">
    <property type="entry name" value="MukB_hinge"/>
</dbReference>
<dbReference type="InterPro" id="IPR042501">
    <property type="entry name" value="MukB_hinge_sf"/>
</dbReference>
<dbReference type="InterPro" id="IPR007406">
    <property type="entry name" value="MukB_N_dom"/>
</dbReference>
<dbReference type="InterPro" id="IPR027417">
    <property type="entry name" value="P-loop_NTPase"/>
</dbReference>
<dbReference type="NCBIfam" id="NF003422">
    <property type="entry name" value="PRK04863.1"/>
    <property type="match status" value="1"/>
</dbReference>
<dbReference type="PANTHER" id="PTHR42963">
    <property type="entry name" value="CHROMOSOME PARTITION PROTEIN MUKB"/>
    <property type="match status" value="1"/>
</dbReference>
<dbReference type="PANTHER" id="PTHR42963:SF1">
    <property type="entry name" value="DUF4476 DOMAIN-CONTAINING PROTEIN"/>
    <property type="match status" value="1"/>
</dbReference>
<dbReference type="Pfam" id="PF04310">
    <property type="entry name" value="MukB"/>
    <property type="match status" value="1"/>
</dbReference>
<dbReference type="Pfam" id="PF16330">
    <property type="entry name" value="MukB_hinge"/>
    <property type="match status" value="1"/>
</dbReference>
<dbReference type="Pfam" id="PF13558">
    <property type="entry name" value="SbcC_Walker_B"/>
    <property type="match status" value="1"/>
</dbReference>
<dbReference type="PIRSF" id="PIRSF005246">
    <property type="entry name" value="MukB"/>
    <property type="match status" value="1"/>
</dbReference>
<dbReference type="SUPFAM" id="SSF52540">
    <property type="entry name" value="P-loop containing nucleoside triphosphate hydrolases"/>
    <property type="match status" value="2"/>
</dbReference>
<proteinExistence type="inferred from homology"/>
<comment type="function">
    <text evidence="1">Plays a central role in chromosome condensation, segregation and cell cycle progression. Functions as a homodimer, which is essential for chromosome partition. Involved in negative DNA supercoiling in vivo, and by this means organize and compact chromosomes. May achieve or facilitate chromosome segregation by condensation DNA from both sides of a centrally located replisome during cell division.</text>
</comment>
<comment type="subunit">
    <text evidence="1">Homodimerization via its hinge domain. Binds to DNA via its C-terminal region. Interacts, and probably forms a ternary complex, with MukE and MukF via its C-terminal region. The complex formation is stimulated by calcium or magnesium. Interacts with tubulin-related protein FtsZ.</text>
</comment>
<comment type="subcellular location">
    <subcellularLocation>
        <location evidence="1">Cytoplasm</location>
        <location evidence="1">Nucleoid</location>
    </subcellularLocation>
    <text evidence="1">Restricted to the nucleoid region.</text>
</comment>
<comment type="domain">
    <text evidence="1">The hinge domain, which separates the large intramolecular coiled coil regions, allows the homodimerization, forming a V-shaped homodimer.</text>
</comment>
<comment type="similarity">
    <text evidence="1">Belongs to the SMC family. MukB subfamily.</text>
</comment>
<protein>
    <recommendedName>
        <fullName evidence="1">Chromosome partition protein MukB</fullName>
    </recommendedName>
    <alternativeName>
        <fullName evidence="1">Structural maintenance of chromosome-related protein</fullName>
    </alternativeName>
</protein>
<accession>B7M853</accession>
<sequence>MIERGKFRSLTLINWNGFFARTFDLDELVTTLSGGNGAGKSTTMAAFVTALIPDLTLLHFRNTTEAGATSGSRDKGLHGKLKAGVCYSMLDTINSRHQRVVVGVRLQQVAGRDRKVDIKPFAIQGLPMSVQPTQLVTETLNERQARVLPLNELKDKLEAMEGVQFKQFNSITDYHSLMFDLGIIARRLRSASDRSKFYRLIEASLYGGISSAITRSLRDYLLPENSGVRKAFQDMEAALRENRMTLEAIRVTQSDRDLFKHLISEATNYVAADYMRHANERRVHLDKALEFRRELHTSRQQLAAEQYKHVDMARELAEHNGAEGDLEADYQAASDHLNLVQTALRQQEKIERYEADLDELQIRLEEQNEVVAEAIERQEENEARAEAAELEVDELKSQLADYQQALDVQQTRAIQYNQAIAALNRAKELCHLPDLTADSAAEWLETFQAKELEATEKMLSLEQKMSMAQTAHSQFEQAYQLVVAINGPLARNEAWDVARELLREGVDQRHLAEQVQPLRMRLSELEQRLREQQEAERLLADFCKRQGKNFDIDELEALHQELEARIASLSDSVSNAREERMALRQEQEQLQSRIQSLMQRAPVWLAAQNSLNQLSEQCGEEFTSSQDVTEYLQQLLEREREAIVERDEVGARKNAVDEEIERLSQPGGSEDQRLNALAERFGGVLLSEIYDDVSLEDAPYFSALYGPSRHAIVVPDLSQVTEHLEGLTDCPEDLYLIEGDPQSFDDSVFSVDELEKAVVVKIADRQWRYSRFPEVPLFGRAARESRIESLHAEREVLSERFATLSFDVQKTQRLHQAFSRFIGSHLAVAFESDPEAEIRQLNSRRVELERALSNHENDNQQQRIQFEQAKEGVTALNRILPRLNLLADDSLADRVDEIRERLDEAQEAARFVQQFGNQLAKLEPIVSVLQSDPEQFEQLKEDYAYSQQMQRDARQQAFALTEVVQRRAHFSYSDSAEMLSGNSDLNEKLRERLEQAEAERTRAREALRGHAAQLSQYNQVLASLKSSYDTKKELLNDLQRELQDIGVRADSGAEERARIRRDELHAQLSNNRSRRNQLEKALTFCEAEMDNLTRKLRKLERDYFEMREQVVTAKAGWCAVMRMVKDNGVERRLHRRELAYLSADDLRSMSDKALGALRLAVADNEHLRDVLRMSEDPKRPERKIQFFVAVYQHLRERIRQDIIRTDDPVEAIEQMEIELSRLTEELTSREQKLAISSRSVANIIRKTIQREQNRIRMLNQGLQNVSFGQVNSVRLNVNVRETHAMLLDVLSEQHEQHQDLFNSNRLTFSEALAKLYQRLNPQIDMGQRTPQTIGEELLDYRNYLEMEVEVNRGSDGWLRAESGALSTGEAIGTGMSILVMVVQSWEDESRRLRGKDISPCRLLFLDEAARLDARSIATLFELCERLQMQLIIAAPENISPEKGTTYKLVRKVFQNTEHVHVVGLRGFAPQLPETLPGSDEAPSQAS</sequence>
<gene>
    <name evidence="1" type="primary">mukB</name>
    <name type="ordered locus">ECIAI1_0965</name>
</gene>
<keyword id="KW-0067">ATP-binding</keyword>
<keyword id="KW-0131">Cell cycle</keyword>
<keyword id="KW-0132">Cell division</keyword>
<keyword id="KW-0159">Chromosome partition</keyword>
<keyword id="KW-0175">Coiled coil</keyword>
<keyword id="KW-0963">Cytoplasm</keyword>
<keyword id="KW-0226">DNA condensation</keyword>
<keyword id="KW-0238">DNA-binding</keyword>
<keyword id="KW-0547">Nucleotide-binding</keyword>
<feature type="chain" id="PRO_1000187472" description="Chromosome partition protein MukB">
    <location>
        <begin position="1"/>
        <end position="1486"/>
    </location>
</feature>
<feature type="region of interest" description="Flexible hinge" evidence="1">
    <location>
        <begin position="666"/>
        <end position="783"/>
    </location>
</feature>
<feature type="coiled-coil region" evidence="1">
    <location>
        <begin position="326"/>
        <end position="418"/>
    </location>
</feature>
<feature type="coiled-coil region" evidence="1">
    <location>
        <begin position="444"/>
        <end position="480"/>
    </location>
</feature>
<feature type="coiled-coil region" evidence="1">
    <location>
        <begin position="509"/>
        <end position="603"/>
    </location>
</feature>
<feature type="coiled-coil region" evidence="1">
    <location>
        <begin position="835"/>
        <end position="923"/>
    </location>
</feature>
<feature type="coiled-coil region" evidence="1">
    <location>
        <begin position="977"/>
        <end position="1115"/>
    </location>
</feature>
<feature type="coiled-coil region" evidence="1">
    <location>
        <begin position="1209"/>
        <end position="1266"/>
    </location>
</feature>
<feature type="binding site" evidence="1">
    <location>
        <begin position="34"/>
        <end position="41"/>
    </location>
    <ligand>
        <name>ATP</name>
        <dbReference type="ChEBI" id="CHEBI:30616"/>
    </ligand>
</feature>
<reference key="1">
    <citation type="journal article" date="2009" name="PLoS Genet.">
        <title>Organised genome dynamics in the Escherichia coli species results in highly diverse adaptive paths.</title>
        <authorList>
            <person name="Touchon M."/>
            <person name="Hoede C."/>
            <person name="Tenaillon O."/>
            <person name="Barbe V."/>
            <person name="Baeriswyl S."/>
            <person name="Bidet P."/>
            <person name="Bingen E."/>
            <person name="Bonacorsi S."/>
            <person name="Bouchier C."/>
            <person name="Bouvet O."/>
            <person name="Calteau A."/>
            <person name="Chiapello H."/>
            <person name="Clermont O."/>
            <person name="Cruveiller S."/>
            <person name="Danchin A."/>
            <person name="Diard M."/>
            <person name="Dossat C."/>
            <person name="Karoui M.E."/>
            <person name="Frapy E."/>
            <person name="Garry L."/>
            <person name="Ghigo J.M."/>
            <person name="Gilles A.M."/>
            <person name="Johnson J."/>
            <person name="Le Bouguenec C."/>
            <person name="Lescat M."/>
            <person name="Mangenot S."/>
            <person name="Martinez-Jehanne V."/>
            <person name="Matic I."/>
            <person name="Nassif X."/>
            <person name="Oztas S."/>
            <person name="Petit M.A."/>
            <person name="Pichon C."/>
            <person name="Rouy Z."/>
            <person name="Ruf C.S."/>
            <person name="Schneider D."/>
            <person name="Tourret J."/>
            <person name="Vacherie B."/>
            <person name="Vallenet D."/>
            <person name="Medigue C."/>
            <person name="Rocha E.P.C."/>
            <person name="Denamur E."/>
        </authorList>
    </citation>
    <scope>NUCLEOTIDE SEQUENCE [LARGE SCALE GENOMIC DNA]</scope>
    <source>
        <strain>IAI1</strain>
    </source>
</reference>
<evidence type="ECO:0000255" key="1">
    <source>
        <dbReference type="HAMAP-Rule" id="MF_01800"/>
    </source>
</evidence>
<organism>
    <name type="scientific">Escherichia coli O8 (strain IAI1)</name>
    <dbReference type="NCBI Taxonomy" id="585034"/>
    <lineage>
        <taxon>Bacteria</taxon>
        <taxon>Pseudomonadati</taxon>
        <taxon>Pseudomonadota</taxon>
        <taxon>Gammaproteobacteria</taxon>
        <taxon>Enterobacterales</taxon>
        <taxon>Enterobacteriaceae</taxon>
        <taxon>Escherichia</taxon>
    </lineage>
</organism>
<name>MUKB_ECO8A</name>